<protein>
    <recommendedName>
        <fullName evidence="1">Acetylglutamate kinase</fullName>
        <ecNumber evidence="1">2.7.2.8</ecNumber>
    </recommendedName>
    <alternativeName>
        <fullName evidence="1">N-acetyl-L-glutamate 5-phosphotransferase</fullName>
    </alternativeName>
    <alternativeName>
        <fullName evidence="1">NAG kinase</fullName>
        <shortName evidence="1">NAGK</shortName>
    </alternativeName>
</protein>
<comment type="function">
    <text evidence="1">Catalyzes the ATP-dependent phosphorylation of N-acetyl-L-glutamate.</text>
</comment>
<comment type="catalytic activity">
    <reaction evidence="1">
        <text>N-acetyl-L-glutamate + ATP = N-acetyl-L-glutamyl 5-phosphate + ADP</text>
        <dbReference type="Rhea" id="RHEA:14629"/>
        <dbReference type="ChEBI" id="CHEBI:30616"/>
        <dbReference type="ChEBI" id="CHEBI:44337"/>
        <dbReference type="ChEBI" id="CHEBI:57936"/>
        <dbReference type="ChEBI" id="CHEBI:456216"/>
        <dbReference type="EC" id="2.7.2.8"/>
    </reaction>
</comment>
<comment type="pathway">
    <text evidence="1">Amino-acid biosynthesis; L-arginine biosynthesis; N(2)-acetyl-L-ornithine from L-glutamate: step 2/4.</text>
</comment>
<comment type="subunit">
    <text evidence="1">Homodimer.</text>
</comment>
<comment type="subcellular location">
    <subcellularLocation>
        <location evidence="1">Cytoplasm</location>
    </subcellularLocation>
</comment>
<comment type="similarity">
    <text evidence="1">Belongs to the acetylglutamate kinase family. ArgB subfamily.</text>
</comment>
<organism>
    <name type="scientific">Escherichia coli O8 (strain IAI1)</name>
    <dbReference type="NCBI Taxonomy" id="585034"/>
    <lineage>
        <taxon>Bacteria</taxon>
        <taxon>Pseudomonadati</taxon>
        <taxon>Pseudomonadota</taxon>
        <taxon>Gammaproteobacteria</taxon>
        <taxon>Enterobacterales</taxon>
        <taxon>Enterobacteriaceae</taxon>
        <taxon>Escherichia</taxon>
    </lineage>
</organism>
<evidence type="ECO:0000255" key="1">
    <source>
        <dbReference type="HAMAP-Rule" id="MF_00082"/>
    </source>
</evidence>
<gene>
    <name evidence="1" type="primary">argB</name>
    <name type="ordered locus">ECIAI1_4167</name>
</gene>
<feature type="chain" id="PRO_1000117124" description="Acetylglutamate kinase">
    <location>
        <begin position="1"/>
        <end position="257"/>
    </location>
</feature>
<feature type="binding site" evidence="1">
    <location>
        <begin position="43"/>
        <end position="44"/>
    </location>
    <ligand>
        <name>substrate</name>
    </ligand>
</feature>
<feature type="binding site" evidence="1">
    <location>
        <position position="65"/>
    </location>
    <ligand>
        <name>substrate</name>
    </ligand>
</feature>
<feature type="binding site" evidence="1">
    <location>
        <position position="157"/>
    </location>
    <ligand>
        <name>substrate</name>
    </ligand>
</feature>
<feature type="binding site" evidence="1">
    <location>
        <begin position="180"/>
        <end position="185"/>
    </location>
    <ligand>
        <name>ATP</name>
        <dbReference type="ChEBI" id="CHEBI:30616"/>
    </ligand>
</feature>
<feature type="binding site" evidence="1">
    <location>
        <begin position="208"/>
        <end position="210"/>
    </location>
    <ligand>
        <name>ATP</name>
        <dbReference type="ChEBI" id="CHEBI:30616"/>
    </ligand>
</feature>
<feature type="site" description="Transition state stabilizer" evidence="1">
    <location>
        <position position="7"/>
    </location>
</feature>
<feature type="site" description="Transition state stabilizer" evidence="1">
    <location>
        <position position="216"/>
    </location>
</feature>
<sequence length="257" mass="27028">MNPLIIKLGGVLLDSEEALERLFSALVNYRESHQRPLVIVHGGGCVVDELMKGLNLPVKKKNGLRVTPADQIDIITGALAGTANKTLLAWAKKHQIAAVGLFLGDGDSVKVTQLDEELGHVGLAQPGSPKLINSLLENGYLPVVSSIGVTDEGQLMNVNADQAATALAATLGADLILLSDVSGILDGKGQRIAEMTAAKAEQLIEQGIITDGMIVKVNAALDAARTLGRPVDIASWRHAEQLPALFNGMPMGTRILA</sequence>
<name>ARGB_ECO8A</name>
<keyword id="KW-0028">Amino-acid biosynthesis</keyword>
<keyword id="KW-0055">Arginine biosynthesis</keyword>
<keyword id="KW-0067">ATP-binding</keyword>
<keyword id="KW-0963">Cytoplasm</keyword>
<keyword id="KW-0418">Kinase</keyword>
<keyword id="KW-0547">Nucleotide-binding</keyword>
<keyword id="KW-0808">Transferase</keyword>
<reference key="1">
    <citation type="journal article" date="2009" name="PLoS Genet.">
        <title>Organised genome dynamics in the Escherichia coli species results in highly diverse adaptive paths.</title>
        <authorList>
            <person name="Touchon M."/>
            <person name="Hoede C."/>
            <person name="Tenaillon O."/>
            <person name="Barbe V."/>
            <person name="Baeriswyl S."/>
            <person name="Bidet P."/>
            <person name="Bingen E."/>
            <person name="Bonacorsi S."/>
            <person name="Bouchier C."/>
            <person name="Bouvet O."/>
            <person name="Calteau A."/>
            <person name="Chiapello H."/>
            <person name="Clermont O."/>
            <person name="Cruveiller S."/>
            <person name="Danchin A."/>
            <person name="Diard M."/>
            <person name="Dossat C."/>
            <person name="Karoui M.E."/>
            <person name="Frapy E."/>
            <person name="Garry L."/>
            <person name="Ghigo J.M."/>
            <person name="Gilles A.M."/>
            <person name="Johnson J."/>
            <person name="Le Bouguenec C."/>
            <person name="Lescat M."/>
            <person name="Mangenot S."/>
            <person name="Martinez-Jehanne V."/>
            <person name="Matic I."/>
            <person name="Nassif X."/>
            <person name="Oztas S."/>
            <person name="Petit M.A."/>
            <person name="Pichon C."/>
            <person name="Rouy Z."/>
            <person name="Ruf C.S."/>
            <person name="Schneider D."/>
            <person name="Tourret J."/>
            <person name="Vacherie B."/>
            <person name="Vallenet D."/>
            <person name="Medigue C."/>
            <person name="Rocha E.P.C."/>
            <person name="Denamur E."/>
        </authorList>
    </citation>
    <scope>NUCLEOTIDE SEQUENCE [LARGE SCALE GENOMIC DNA]</scope>
    <source>
        <strain>IAI1</strain>
    </source>
</reference>
<dbReference type="EC" id="2.7.2.8" evidence="1"/>
<dbReference type="EMBL" id="CU928160">
    <property type="protein sequence ID" value="CAR00938.1"/>
    <property type="molecule type" value="Genomic_DNA"/>
</dbReference>
<dbReference type="SMR" id="B7M713"/>
<dbReference type="KEGG" id="ecr:ECIAI1_4167"/>
<dbReference type="HOGENOM" id="CLU_053680_1_1_6"/>
<dbReference type="UniPathway" id="UPA00068">
    <property type="reaction ID" value="UER00107"/>
</dbReference>
<dbReference type="GO" id="GO:0005737">
    <property type="term" value="C:cytoplasm"/>
    <property type="evidence" value="ECO:0007669"/>
    <property type="project" value="UniProtKB-SubCell"/>
</dbReference>
<dbReference type="GO" id="GO:0003991">
    <property type="term" value="F:acetylglutamate kinase activity"/>
    <property type="evidence" value="ECO:0007669"/>
    <property type="project" value="UniProtKB-UniRule"/>
</dbReference>
<dbReference type="GO" id="GO:0005524">
    <property type="term" value="F:ATP binding"/>
    <property type="evidence" value="ECO:0007669"/>
    <property type="project" value="UniProtKB-UniRule"/>
</dbReference>
<dbReference type="GO" id="GO:0042450">
    <property type="term" value="P:arginine biosynthetic process via ornithine"/>
    <property type="evidence" value="ECO:0007669"/>
    <property type="project" value="UniProtKB-UniRule"/>
</dbReference>
<dbReference type="GO" id="GO:0006526">
    <property type="term" value="P:L-arginine biosynthetic process"/>
    <property type="evidence" value="ECO:0007669"/>
    <property type="project" value="UniProtKB-UniPathway"/>
</dbReference>
<dbReference type="CDD" id="cd04249">
    <property type="entry name" value="AAK_NAGK-NC"/>
    <property type="match status" value="1"/>
</dbReference>
<dbReference type="FunFam" id="3.40.1160.10:FF:000008">
    <property type="entry name" value="Acetylglutamate kinase"/>
    <property type="match status" value="1"/>
</dbReference>
<dbReference type="Gene3D" id="3.40.1160.10">
    <property type="entry name" value="Acetylglutamate kinase-like"/>
    <property type="match status" value="1"/>
</dbReference>
<dbReference type="HAMAP" id="MF_00082">
    <property type="entry name" value="ArgB"/>
    <property type="match status" value="1"/>
</dbReference>
<dbReference type="InterPro" id="IPR036393">
    <property type="entry name" value="AceGlu_kinase-like_sf"/>
</dbReference>
<dbReference type="InterPro" id="IPR004662">
    <property type="entry name" value="AcgluKinase_fam"/>
</dbReference>
<dbReference type="InterPro" id="IPR037528">
    <property type="entry name" value="ArgB"/>
</dbReference>
<dbReference type="InterPro" id="IPR001048">
    <property type="entry name" value="Asp/Glu/Uridylate_kinase"/>
</dbReference>
<dbReference type="InterPro" id="IPR041731">
    <property type="entry name" value="NAGK-NC"/>
</dbReference>
<dbReference type="NCBIfam" id="TIGR00761">
    <property type="entry name" value="argB"/>
    <property type="match status" value="1"/>
</dbReference>
<dbReference type="PANTHER" id="PTHR23342">
    <property type="entry name" value="N-ACETYLGLUTAMATE SYNTHASE"/>
    <property type="match status" value="1"/>
</dbReference>
<dbReference type="PANTHER" id="PTHR23342:SF0">
    <property type="entry name" value="N-ACETYLGLUTAMATE SYNTHASE, MITOCHONDRIAL"/>
    <property type="match status" value="1"/>
</dbReference>
<dbReference type="Pfam" id="PF00696">
    <property type="entry name" value="AA_kinase"/>
    <property type="match status" value="1"/>
</dbReference>
<dbReference type="PIRSF" id="PIRSF000728">
    <property type="entry name" value="NAGK"/>
    <property type="match status" value="1"/>
</dbReference>
<dbReference type="SUPFAM" id="SSF53633">
    <property type="entry name" value="Carbamate kinase-like"/>
    <property type="match status" value="1"/>
</dbReference>
<accession>B7M713</accession>
<proteinExistence type="inferred from homology"/>